<reference key="1">
    <citation type="journal article" date="1999" name="Science">
        <title>Genome sequence of the radioresistant bacterium Deinococcus radiodurans R1.</title>
        <authorList>
            <person name="White O."/>
            <person name="Eisen J.A."/>
            <person name="Heidelberg J.F."/>
            <person name="Hickey E.K."/>
            <person name="Peterson J.D."/>
            <person name="Dodson R.J."/>
            <person name="Haft D.H."/>
            <person name="Gwinn M.L."/>
            <person name="Nelson W.C."/>
            <person name="Richardson D.L."/>
            <person name="Moffat K.S."/>
            <person name="Qin H."/>
            <person name="Jiang L."/>
            <person name="Pamphile W."/>
            <person name="Crosby M."/>
            <person name="Shen M."/>
            <person name="Vamathevan J.J."/>
            <person name="Lam P."/>
            <person name="McDonald L.A."/>
            <person name="Utterback T.R."/>
            <person name="Zalewski C."/>
            <person name="Makarova K.S."/>
            <person name="Aravind L."/>
            <person name="Daly M.J."/>
            <person name="Minton K.W."/>
            <person name="Fleischmann R.D."/>
            <person name="Ketchum K.A."/>
            <person name="Nelson K.E."/>
            <person name="Salzberg S.L."/>
            <person name="Smith H.O."/>
            <person name="Venter J.C."/>
            <person name="Fraser C.M."/>
        </authorList>
    </citation>
    <scope>NUCLEOTIDE SEQUENCE [LARGE SCALE GENOMIC DNA]</scope>
    <source>
        <strain>ATCC 13939 / DSM 20539 / JCM 16871 / CCUG 27074 / LMG 4051 / NBRC 15346 / NCIMB 9279 / VKM B-1422 / R1</strain>
    </source>
</reference>
<sequence>MTDLSELNFDPSGLIPVVTQDARSGAVLMQAYADRAAVERTLDTREATYYSRSRGEQWVKGQTSGHTQRVVSVHVDCDGDSLLYRVEQTGPACHTGEYSCFYRPLLEDDAPDTGLDGTLERVYATITERLATLPEGSYVARLHAGGLDRVLKKISEEAGEVLLAAKNADRAELATETADLLFHTLFALAEVGVSPADVAAVLQGREGKSGLKGPKEVG</sequence>
<accession>Q9RWD6</accession>
<comment type="catalytic activity">
    <reaction>
        <text>1-(5-phospho-beta-D-ribosyl)-ATP + H2O = 1-(5-phospho-beta-D-ribosyl)-5'-AMP + diphosphate + H(+)</text>
        <dbReference type="Rhea" id="RHEA:22828"/>
        <dbReference type="ChEBI" id="CHEBI:15377"/>
        <dbReference type="ChEBI" id="CHEBI:15378"/>
        <dbReference type="ChEBI" id="CHEBI:33019"/>
        <dbReference type="ChEBI" id="CHEBI:59457"/>
        <dbReference type="ChEBI" id="CHEBI:73183"/>
        <dbReference type="EC" id="3.6.1.31"/>
    </reaction>
</comment>
<comment type="catalytic activity">
    <reaction>
        <text>1-(5-phospho-beta-D-ribosyl)-5'-AMP + H2O = 1-(5-phospho-beta-D-ribosyl)-5-[(5-phospho-beta-D-ribosylamino)methylideneamino]imidazole-4-carboxamide</text>
        <dbReference type="Rhea" id="RHEA:20049"/>
        <dbReference type="ChEBI" id="CHEBI:15377"/>
        <dbReference type="ChEBI" id="CHEBI:58435"/>
        <dbReference type="ChEBI" id="CHEBI:59457"/>
        <dbReference type="EC" id="3.5.4.19"/>
    </reaction>
</comment>
<comment type="pathway">
    <text>Amino-acid biosynthesis; L-histidine biosynthesis; L-histidine from 5-phospho-alpha-D-ribose 1-diphosphate: step 2/9.</text>
</comment>
<comment type="pathway">
    <text>Amino-acid biosynthesis; L-histidine biosynthesis; L-histidine from 5-phospho-alpha-D-ribose 1-diphosphate: step 3/9.</text>
</comment>
<comment type="subcellular location">
    <subcellularLocation>
        <location evidence="1">Cytoplasm</location>
    </subcellularLocation>
</comment>
<comment type="similarity">
    <text evidence="2">In the N-terminal section; belongs to the PRA-CH family.</text>
</comment>
<comment type="similarity">
    <text evidence="2">In the C-terminal section; belongs to the PRA-PH family.</text>
</comment>
<name>HIS2_DEIRA</name>
<proteinExistence type="inferred from homology"/>
<organism>
    <name type="scientific">Deinococcus radiodurans (strain ATCC 13939 / DSM 20539 / JCM 16871 / CCUG 27074 / LMG 4051 / NBRC 15346 / NCIMB 9279 / VKM B-1422 / R1)</name>
    <dbReference type="NCBI Taxonomy" id="243230"/>
    <lineage>
        <taxon>Bacteria</taxon>
        <taxon>Thermotogati</taxon>
        <taxon>Deinococcota</taxon>
        <taxon>Deinococci</taxon>
        <taxon>Deinococcales</taxon>
        <taxon>Deinococcaceae</taxon>
        <taxon>Deinococcus</taxon>
    </lineage>
</organism>
<keyword id="KW-0028">Amino-acid biosynthesis</keyword>
<keyword id="KW-0067">ATP-binding</keyword>
<keyword id="KW-0963">Cytoplasm</keyword>
<keyword id="KW-0368">Histidine biosynthesis</keyword>
<keyword id="KW-0378">Hydrolase</keyword>
<keyword id="KW-0511">Multifunctional enzyme</keyword>
<keyword id="KW-0547">Nucleotide-binding</keyword>
<keyword id="KW-1185">Reference proteome</keyword>
<evidence type="ECO:0000250" key="1"/>
<evidence type="ECO:0000305" key="2"/>
<protein>
    <recommendedName>
        <fullName>Histidine biosynthesis bifunctional protein HisIE</fullName>
    </recommendedName>
    <domain>
        <recommendedName>
            <fullName>Phosphoribosyl-AMP cyclohydrolase</fullName>
            <shortName>PRA-CH</shortName>
            <ecNumber>3.5.4.19</ecNumber>
        </recommendedName>
    </domain>
    <domain>
        <recommendedName>
            <fullName>Phosphoribosyl-ATP pyrophosphatase</fullName>
            <shortName>PRA-PH</shortName>
            <ecNumber>3.6.1.31</ecNumber>
        </recommendedName>
    </domain>
</protein>
<gene>
    <name type="primary">hisI</name>
    <name type="synonym">hisIE</name>
    <name type="ordered locus">DR_0733</name>
</gene>
<dbReference type="EC" id="3.5.4.19"/>
<dbReference type="EC" id="3.6.1.31"/>
<dbReference type="EMBL" id="AE000513">
    <property type="protein sequence ID" value="AAF10312.1"/>
    <property type="molecule type" value="Genomic_DNA"/>
</dbReference>
<dbReference type="PIR" id="D75482">
    <property type="entry name" value="D75482"/>
</dbReference>
<dbReference type="RefSeq" id="NP_294456.1">
    <property type="nucleotide sequence ID" value="NC_001263.1"/>
</dbReference>
<dbReference type="RefSeq" id="WP_010887378.1">
    <property type="nucleotide sequence ID" value="NC_001263.1"/>
</dbReference>
<dbReference type="SMR" id="Q9RWD6"/>
<dbReference type="FunCoup" id="Q9RWD6">
    <property type="interactions" value="177"/>
</dbReference>
<dbReference type="STRING" id="243230.DR_0733"/>
<dbReference type="PaxDb" id="243230-DR_0733"/>
<dbReference type="EnsemblBacteria" id="AAF10312">
    <property type="protein sequence ID" value="AAF10312"/>
    <property type="gene ID" value="DR_0733"/>
</dbReference>
<dbReference type="GeneID" id="69516979"/>
<dbReference type="KEGG" id="dra:DR_0733"/>
<dbReference type="PATRIC" id="fig|243230.17.peg.911"/>
<dbReference type="eggNOG" id="COG0139">
    <property type="taxonomic scope" value="Bacteria"/>
</dbReference>
<dbReference type="eggNOG" id="COG0140">
    <property type="taxonomic scope" value="Bacteria"/>
</dbReference>
<dbReference type="HOGENOM" id="CLU_048577_3_1_0"/>
<dbReference type="InParanoid" id="Q9RWD6"/>
<dbReference type="OrthoDB" id="9795769at2"/>
<dbReference type="UniPathway" id="UPA00031">
    <property type="reaction ID" value="UER00007"/>
</dbReference>
<dbReference type="UniPathway" id="UPA00031">
    <property type="reaction ID" value="UER00008"/>
</dbReference>
<dbReference type="Proteomes" id="UP000002524">
    <property type="component" value="Chromosome 1"/>
</dbReference>
<dbReference type="GO" id="GO:0005737">
    <property type="term" value="C:cytoplasm"/>
    <property type="evidence" value="ECO:0007669"/>
    <property type="project" value="UniProtKB-SubCell"/>
</dbReference>
<dbReference type="GO" id="GO:0005524">
    <property type="term" value="F:ATP binding"/>
    <property type="evidence" value="ECO:0007669"/>
    <property type="project" value="UniProtKB-KW"/>
</dbReference>
<dbReference type="GO" id="GO:0004635">
    <property type="term" value="F:phosphoribosyl-AMP cyclohydrolase activity"/>
    <property type="evidence" value="ECO:0007669"/>
    <property type="project" value="UniProtKB-UniRule"/>
</dbReference>
<dbReference type="GO" id="GO:0004636">
    <property type="term" value="F:phosphoribosyl-ATP diphosphatase activity"/>
    <property type="evidence" value="ECO:0007669"/>
    <property type="project" value="UniProtKB-UniRule"/>
</dbReference>
<dbReference type="GO" id="GO:0000105">
    <property type="term" value="P:L-histidine biosynthetic process"/>
    <property type="evidence" value="ECO:0007669"/>
    <property type="project" value="UniProtKB-UniRule"/>
</dbReference>
<dbReference type="CDD" id="cd11534">
    <property type="entry name" value="NTP-PPase_HisIE_like"/>
    <property type="match status" value="1"/>
</dbReference>
<dbReference type="FunFam" id="3.10.20.810:FF:000001">
    <property type="entry name" value="Histidine biosynthesis bifunctional protein HisIE"/>
    <property type="match status" value="1"/>
</dbReference>
<dbReference type="Gene3D" id="1.10.287.1080">
    <property type="entry name" value="MazG-like"/>
    <property type="match status" value="1"/>
</dbReference>
<dbReference type="Gene3D" id="3.10.20.810">
    <property type="entry name" value="Phosphoribosyl-AMP cyclohydrolase"/>
    <property type="match status" value="1"/>
</dbReference>
<dbReference type="HAMAP" id="MF_01020">
    <property type="entry name" value="HisE"/>
    <property type="match status" value="1"/>
</dbReference>
<dbReference type="HAMAP" id="MF_01021">
    <property type="entry name" value="HisI"/>
    <property type="match status" value="1"/>
</dbReference>
<dbReference type="HAMAP" id="MF_01019">
    <property type="entry name" value="HisIE"/>
    <property type="match status" value="1"/>
</dbReference>
<dbReference type="InterPro" id="IPR023019">
    <property type="entry name" value="His_synth_HisIE"/>
</dbReference>
<dbReference type="InterPro" id="IPR008179">
    <property type="entry name" value="HisE"/>
</dbReference>
<dbReference type="InterPro" id="IPR026660">
    <property type="entry name" value="PRA-CH"/>
</dbReference>
<dbReference type="InterPro" id="IPR021130">
    <property type="entry name" value="PRib-ATP_PPHydrolase-like"/>
</dbReference>
<dbReference type="InterPro" id="IPR002496">
    <property type="entry name" value="PRib_AMP_CycHydrolase_dom"/>
</dbReference>
<dbReference type="InterPro" id="IPR038019">
    <property type="entry name" value="PRib_AMP_CycHydrolase_sf"/>
</dbReference>
<dbReference type="NCBIfam" id="TIGR03188">
    <property type="entry name" value="histidine_hisI"/>
    <property type="match status" value="1"/>
</dbReference>
<dbReference type="NCBIfam" id="NF000768">
    <property type="entry name" value="PRK00051.1"/>
    <property type="match status" value="1"/>
</dbReference>
<dbReference type="NCBIfam" id="NF001611">
    <property type="entry name" value="PRK00400.1-3"/>
    <property type="match status" value="1"/>
</dbReference>
<dbReference type="NCBIfam" id="NF002747">
    <property type="entry name" value="PRK02759.1"/>
    <property type="match status" value="1"/>
</dbReference>
<dbReference type="PANTHER" id="PTHR42945">
    <property type="entry name" value="HISTIDINE BIOSYNTHESIS BIFUNCTIONAL PROTEIN"/>
    <property type="match status" value="1"/>
</dbReference>
<dbReference type="PANTHER" id="PTHR42945:SF1">
    <property type="entry name" value="HISTIDINE BIOSYNTHESIS BIFUNCTIONAL PROTEIN HIS7"/>
    <property type="match status" value="1"/>
</dbReference>
<dbReference type="Pfam" id="PF01502">
    <property type="entry name" value="PRA-CH"/>
    <property type="match status" value="1"/>
</dbReference>
<dbReference type="Pfam" id="PF01503">
    <property type="entry name" value="PRA-PH"/>
    <property type="match status" value="1"/>
</dbReference>
<dbReference type="SUPFAM" id="SSF101386">
    <property type="entry name" value="all-alpha NTP pyrophosphatases"/>
    <property type="match status" value="1"/>
</dbReference>
<dbReference type="SUPFAM" id="SSF141734">
    <property type="entry name" value="HisI-like"/>
    <property type="match status" value="1"/>
</dbReference>
<feature type="chain" id="PRO_0000136410" description="Histidine biosynthesis bifunctional protein HisIE">
    <location>
        <begin position="1"/>
        <end position="218"/>
    </location>
</feature>
<feature type="region of interest" description="Phosphoribosyl-AMP cyclohydrolase">
    <location>
        <begin position="1"/>
        <end position="118"/>
    </location>
</feature>
<feature type="region of interest" description="Phosphoribosyl-ATP pyrophosphohydrolase">
    <location>
        <begin position="119"/>
        <end position="218"/>
    </location>
</feature>